<dbReference type="EC" id="6.1.1.5" evidence="1"/>
<dbReference type="EMBL" id="AM040265">
    <property type="protein sequence ID" value="CAJ12360.1"/>
    <property type="molecule type" value="Genomic_DNA"/>
</dbReference>
<dbReference type="RefSeq" id="WP_002966382.1">
    <property type="nucleotide sequence ID" value="NZ_KN046823.1"/>
</dbReference>
<dbReference type="SMR" id="P0C124"/>
<dbReference type="STRING" id="359391.BAB2_0194"/>
<dbReference type="GeneID" id="97535610"/>
<dbReference type="KEGG" id="bmf:BAB2_0194"/>
<dbReference type="PATRIC" id="fig|359391.11.peg.2144"/>
<dbReference type="HOGENOM" id="CLU_001493_7_1_5"/>
<dbReference type="PhylomeDB" id="P0C124"/>
<dbReference type="Proteomes" id="UP000002719">
    <property type="component" value="Chromosome II"/>
</dbReference>
<dbReference type="GO" id="GO:0005829">
    <property type="term" value="C:cytosol"/>
    <property type="evidence" value="ECO:0007669"/>
    <property type="project" value="TreeGrafter"/>
</dbReference>
<dbReference type="GO" id="GO:0002161">
    <property type="term" value="F:aminoacyl-tRNA deacylase activity"/>
    <property type="evidence" value="ECO:0007669"/>
    <property type="project" value="InterPro"/>
</dbReference>
<dbReference type="GO" id="GO:0005524">
    <property type="term" value="F:ATP binding"/>
    <property type="evidence" value="ECO:0007669"/>
    <property type="project" value="UniProtKB-UniRule"/>
</dbReference>
<dbReference type="GO" id="GO:0004822">
    <property type="term" value="F:isoleucine-tRNA ligase activity"/>
    <property type="evidence" value="ECO:0007669"/>
    <property type="project" value="UniProtKB-UniRule"/>
</dbReference>
<dbReference type="GO" id="GO:0000049">
    <property type="term" value="F:tRNA binding"/>
    <property type="evidence" value="ECO:0007669"/>
    <property type="project" value="InterPro"/>
</dbReference>
<dbReference type="GO" id="GO:0006428">
    <property type="term" value="P:isoleucyl-tRNA aminoacylation"/>
    <property type="evidence" value="ECO:0007669"/>
    <property type="project" value="UniProtKB-UniRule"/>
</dbReference>
<dbReference type="CDD" id="cd07960">
    <property type="entry name" value="Anticodon_Ia_Ile_BEm"/>
    <property type="match status" value="1"/>
</dbReference>
<dbReference type="FunFam" id="3.40.50.620:FF:000042">
    <property type="entry name" value="Isoleucine--tRNA ligase"/>
    <property type="match status" value="1"/>
</dbReference>
<dbReference type="Gene3D" id="1.10.730.20">
    <property type="match status" value="1"/>
</dbReference>
<dbReference type="Gene3D" id="3.40.50.620">
    <property type="entry name" value="HUPs"/>
    <property type="match status" value="2"/>
</dbReference>
<dbReference type="Gene3D" id="3.90.740.10">
    <property type="entry name" value="Valyl/Leucyl/Isoleucyl-tRNA synthetase, editing domain"/>
    <property type="match status" value="1"/>
</dbReference>
<dbReference type="HAMAP" id="MF_02002">
    <property type="entry name" value="Ile_tRNA_synth_type1"/>
    <property type="match status" value="1"/>
</dbReference>
<dbReference type="InterPro" id="IPR001412">
    <property type="entry name" value="aa-tRNA-synth_I_CS"/>
</dbReference>
<dbReference type="InterPro" id="IPR002300">
    <property type="entry name" value="aa-tRNA-synth_Ia"/>
</dbReference>
<dbReference type="InterPro" id="IPR033708">
    <property type="entry name" value="Anticodon_Ile_BEm"/>
</dbReference>
<dbReference type="InterPro" id="IPR002301">
    <property type="entry name" value="Ile-tRNA-ligase"/>
</dbReference>
<dbReference type="InterPro" id="IPR023585">
    <property type="entry name" value="Ile-tRNA-ligase_type1"/>
</dbReference>
<dbReference type="InterPro" id="IPR050081">
    <property type="entry name" value="Ile-tRNA_ligase"/>
</dbReference>
<dbReference type="InterPro" id="IPR013155">
    <property type="entry name" value="M/V/L/I-tRNA-synth_anticd-bd"/>
</dbReference>
<dbReference type="InterPro" id="IPR014729">
    <property type="entry name" value="Rossmann-like_a/b/a_fold"/>
</dbReference>
<dbReference type="InterPro" id="IPR009080">
    <property type="entry name" value="tRNAsynth_Ia_anticodon-bd"/>
</dbReference>
<dbReference type="InterPro" id="IPR009008">
    <property type="entry name" value="Val/Leu/Ile-tRNA-synth_edit"/>
</dbReference>
<dbReference type="NCBIfam" id="TIGR00392">
    <property type="entry name" value="ileS"/>
    <property type="match status" value="1"/>
</dbReference>
<dbReference type="PANTHER" id="PTHR42765:SF1">
    <property type="entry name" value="ISOLEUCINE--TRNA LIGASE, MITOCHONDRIAL"/>
    <property type="match status" value="1"/>
</dbReference>
<dbReference type="PANTHER" id="PTHR42765">
    <property type="entry name" value="SOLEUCYL-TRNA SYNTHETASE"/>
    <property type="match status" value="1"/>
</dbReference>
<dbReference type="Pfam" id="PF08264">
    <property type="entry name" value="Anticodon_1"/>
    <property type="match status" value="1"/>
</dbReference>
<dbReference type="Pfam" id="PF00133">
    <property type="entry name" value="tRNA-synt_1"/>
    <property type="match status" value="1"/>
</dbReference>
<dbReference type="PRINTS" id="PR00984">
    <property type="entry name" value="TRNASYNTHILE"/>
</dbReference>
<dbReference type="SUPFAM" id="SSF47323">
    <property type="entry name" value="Anticodon-binding domain of a subclass of class I aminoacyl-tRNA synthetases"/>
    <property type="match status" value="1"/>
</dbReference>
<dbReference type="SUPFAM" id="SSF52374">
    <property type="entry name" value="Nucleotidylyl transferase"/>
    <property type="match status" value="1"/>
</dbReference>
<dbReference type="SUPFAM" id="SSF50677">
    <property type="entry name" value="ValRS/IleRS/LeuRS editing domain"/>
    <property type="match status" value="1"/>
</dbReference>
<dbReference type="PROSITE" id="PS00178">
    <property type="entry name" value="AA_TRNA_LIGASE_I"/>
    <property type="match status" value="1"/>
</dbReference>
<accession>P0C124</accession>
<accession>Q579P3</accession>
<name>SYI_BRUA2</name>
<organism>
    <name type="scientific">Brucella abortus (strain 2308)</name>
    <dbReference type="NCBI Taxonomy" id="359391"/>
    <lineage>
        <taxon>Bacteria</taxon>
        <taxon>Pseudomonadati</taxon>
        <taxon>Pseudomonadota</taxon>
        <taxon>Alphaproteobacteria</taxon>
        <taxon>Hyphomicrobiales</taxon>
        <taxon>Brucellaceae</taxon>
        <taxon>Brucella/Ochrobactrum group</taxon>
        <taxon>Brucella</taxon>
    </lineage>
</organism>
<feature type="chain" id="PRO_0000098362" description="Isoleucine--tRNA ligase">
    <location>
        <begin position="1"/>
        <end position="972"/>
    </location>
</feature>
<feature type="short sequence motif" description="'HIGH' region">
    <location>
        <begin position="63"/>
        <end position="73"/>
    </location>
</feature>
<feature type="short sequence motif" description="'KMSKS' region">
    <location>
        <begin position="644"/>
        <end position="648"/>
    </location>
</feature>
<feature type="binding site" evidence="1">
    <location>
        <position position="603"/>
    </location>
    <ligand>
        <name>L-isoleucyl-5'-AMP</name>
        <dbReference type="ChEBI" id="CHEBI:178002"/>
    </ligand>
</feature>
<feature type="binding site" evidence="1">
    <location>
        <position position="647"/>
    </location>
    <ligand>
        <name>ATP</name>
        <dbReference type="ChEBI" id="CHEBI:30616"/>
    </ligand>
</feature>
<protein>
    <recommendedName>
        <fullName evidence="1">Isoleucine--tRNA ligase</fullName>
        <ecNumber evidence="1">6.1.1.5</ecNumber>
    </recommendedName>
    <alternativeName>
        <fullName evidence="1">Isoleucyl-tRNA synthetase</fullName>
        <shortName evidence="1">IleRS</shortName>
    </alternativeName>
</protein>
<comment type="function">
    <text evidence="1">Catalyzes the attachment of isoleucine to tRNA(Ile). As IleRS can inadvertently accommodate and process structurally similar amino acids such as valine, to avoid such errors it has two additional distinct tRNA(Ile)-dependent editing activities. One activity is designated as 'pretransfer' editing and involves the hydrolysis of activated Val-AMP. The other activity is designated 'posttransfer' editing and involves deacylation of mischarged Val-tRNA(Ile).</text>
</comment>
<comment type="catalytic activity">
    <reaction evidence="1">
        <text>tRNA(Ile) + L-isoleucine + ATP = L-isoleucyl-tRNA(Ile) + AMP + diphosphate</text>
        <dbReference type="Rhea" id="RHEA:11060"/>
        <dbReference type="Rhea" id="RHEA-COMP:9666"/>
        <dbReference type="Rhea" id="RHEA-COMP:9695"/>
        <dbReference type="ChEBI" id="CHEBI:30616"/>
        <dbReference type="ChEBI" id="CHEBI:33019"/>
        <dbReference type="ChEBI" id="CHEBI:58045"/>
        <dbReference type="ChEBI" id="CHEBI:78442"/>
        <dbReference type="ChEBI" id="CHEBI:78528"/>
        <dbReference type="ChEBI" id="CHEBI:456215"/>
        <dbReference type="EC" id="6.1.1.5"/>
    </reaction>
</comment>
<comment type="subunit">
    <text evidence="1">Monomer.</text>
</comment>
<comment type="subcellular location">
    <subcellularLocation>
        <location evidence="1">Cytoplasm</location>
    </subcellularLocation>
</comment>
<comment type="domain">
    <text evidence="1">IleRS has two distinct active sites: one for aminoacylation and one for editing. The misactivated valine is translocated from the active site to the editing site, which sterically excludes the correctly activated isoleucine. The single editing site contains two valyl binding pockets, one specific for each substrate (Val-AMP or Val-tRNA(Ile)).</text>
</comment>
<comment type="similarity">
    <text evidence="1">Belongs to the class-I aminoacyl-tRNA synthetase family. IleS type 1 subfamily.</text>
</comment>
<reference key="1">
    <citation type="journal article" date="2005" name="Infect. Immun.">
        <title>Whole-genome analyses of speciation events in pathogenic Brucellae.</title>
        <authorList>
            <person name="Chain P.S."/>
            <person name="Comerci D.J."/>
            <person name="Tolmasky M.E."/>
            <person name="Larimer F.W."/>
            <person name="Malfatti S.A."/>
            <person name="Vergez L.M."/>
            <person name="Aguero F."/>
            <person name="Land M.L."/>
            <person name="Ugalde R.A."/>
            <person name="Garcia E."/>
        </authorList>
    </citation>
    <scope>NUCLEOTIDE SEQUENCE [LARGE SCALE GENOMIC DNA]</scope>
    <source>
        <strain>2308</strain>
    </source>
</reference>
<gene>
    <name evidence="1" type="primary">ileS</name>
    <name type="ordered locus">BAB2_0194</name>
</gene>
<proteinExistence type="inferred from homology"/>
<keyword id="KW-0030">Aminoacyl-tRNA synthetase</keyword>
<keyword id="KW-0067">ATP-binding</keyword>
<keyword id="KW-0963">Cytoplasm</keyword>
<keyword id="KW-0436">Ligase</keyword>
<keyword id="KW-0547">Nucleotide-binding</keyword>
<keyword id="KW-0648">Protein biosynthesis</keyword>
<keyword id="KW-1185">Reference proteome</keyword>
<sequence>MTDTTKIDYSKTLYLPQTEFPMRAGLPQREPLFVQRWEEMNLYKKLREQAKDRPLYVLHDGPPYANGNIHIGHALNKILKDVITRSFQMRGYNSNYVPGWDCHGLPIEWKIEEKYRAAGKNKDEVPINEFRKECREFASNWIKVQTEEFKRLAILGDFENPYTTMNFHAEARIAGELLKFAASGQLYRGSKPVMWSVVERTALAEAEVEYHDIESDMIWVKFPVAGEVATENDLSGSAVVIWTTTPWTIPGNRAVSYSSRIEYGLFEITEAENDFGPRPGERLVFADKLVEECCAKAKLQFKRLRSVSAEELGKIVLDHPLKGFGGGYEFVVPMLDGDHVTDDAGTGFVHTAPSHGREDFEAWMDNARQLEARGIDPNIPFPVGDDGFYTKDAPGFGPDREGGPARVIDDNGKKGDANKVVIEQLIAADKLFARGRLKHSYPHSWRSKKPVIFRNTPQWFVYMDKNLGDGTTLRSRALKAIDETRFVPAAGQTRLRSMIEGRPDWVLSRQRAWGVPICVFVDEEGNILQDDAVNKRIMDAFEKEGADAWFADGARERFLGARAGEGWTQVRDILDVWFDSGSTHTFTLEDRPDLKWPADVYLEGSDQHRGWFHSSLLESCGTRGRAPYNAVVTHGFTMDEHGKKMSKSLGNTVTPQDVIKESGADILRLWVMTTDYWEDQRLGKSIIQTNIDAYRKLRNTIRWMLGTLAHDEGENVAYADLPELERLMLHRLTELDELVRSGYDTFDFKRIARALVDFMNVELSAFYFDIRKDALYCDAPSSIRRKAALQTVREIFVRLTTWLAPMLPFTMEEAWLDRYPQSVSIHAEQFRPTPAEWRDDVLAEKWRKVRAVRRVVTGALELERADKRIGSSLEAAPVVYIADKSLSDSLEGLDFAEICITSGISVSDAAAPEGAFTLGDVKGVAVVPERAKGEKCARSWRYTTDVGADPEFPEVSARDAAALRELQALGKL</sequence>
<evidence type="ECO:0000255" key="1">
    <source>
        <dbReference type="HAMAP-Rule" id="MF_02002"/>
    </source>
</evidence>